<sequence>MKRERGRRPRKRVCSFCVDKVESIDYKDTHKIRKYITERGKILPRRISGNCAKHQRQVTVAIKRARHIALLPYIVE</sequence>
<reference key="1">
    <citation type="journal article" date="2006" name="J. Bacteriol.">
        <title>Complete genome sequence of the dehalorespiring bacterium Desulfitobacterium hafniense Y51 and comparison with Dehalococcoides ethenogenes 195.</title>
        <authorList>
            <person name="Nonaka H."/>
            <person name="Keresztes G."/>
            <person name="Shinoda Y."/>
            <person name="Ikenaga Y."/>
            <person name="Abe M."/>
            <person name="Naito K."/>
            <person name="Inatomi K."/>
            <person name="Furukawa K."/>
            <person name="Inui M."/>
            <person name="Yukawa H."/>
        </authorList>
    </citation>
    <scope>NUCLEOTIDE SEQUENCE [LARGE SCALE GENOMIC DNA]</scope>
    <source>
        <strain>Y51</strain>
    </source>
</reference>
<dbReference type="EMBL" id="AP008230">
    <property type="protein sequence ID" value="BAE86823.1"/>
    <property type="molecule type" value="Genomic_DNA"/>
</dbReference>
<dbReference type="RefSeq" id="WP_011462317.1">
    <property type="nucleotide sequence ID" value="NC_007907.1"/>
</dbReference>
<dbReference type="SMR" id="Q24MB9"/>
<dbReference type="STRING" id="138119.DSY5034"/>
<dbReference type="KEGG" id="dsy:DSY5034"/>
<dbReference type="eggNOG" id="COG0238">
    <property type="taxonomic scope" value="Bacteria"/>
</dbReference>
<dbReference type="HOGENOM" id="CLU_148710_2_2_9"/>
<dbReference type="Proteomes" id="UP000001946">
    <property type="component" value="Chromosome"/>
</dbReference>
<dbReference type="GO" id="GO:0022627">
    <property type="term" value="C:cytosolic small ribosomal subunit"/>
    <property type="evidence" value="ECO:0007669"/>
    <property type="project" value="TreeGrafter"/>
</dbReference>
<dbReference type="GO" id="GO:0070181">
    <property type="term" value="F:small ribosomal subunit rRNA binding"/>
    <property type="evidence" value="ECO:0007669"/>
    <property type="project" value="TreeGrafter"/>
</dbReference>
<dbReference type="GO" id="GO:0003735">
    <property type="term" value="F:structural constituent of ribosome"/>
    <property type="evidence" value="ECO:0007669"/>
    <property type="project" value="InterPro"/>
</dbReference>
<dbReference type="GO" id="GO:0006412">
    <property type="term" value="P:translation"/>
    <property type="evidence" value="ECO:0007669"/>
    <property type="project" value="UniProtKB-UniRule"/>
</dbReference>
<dbReference type="FunFam" id="4.10.640.10:FF:000004">
    <property type="entry name" value="30S ribosomal protein S18"/>
    <property type="match status" value="1"/>
</dbReference>
<dbReference type="Gene3D" id="4.10.640.10">
    <property type="entry name" value="Ribosomal protein S18"/>
    <property type="match status" value="1"/>
</dbReference>
<dbReference type="HAMAP" id="MF_00270">
    <property type="entry name" value="Ribosomal_bS18"/>
    <property type="match status" value="1"/>
</dbReference>
<dbReference type="InterPro" id="IPR001648">
    <property type="entry name" value="Ribosomal_bS18"/>
</dbReference>
<dbReference type="InterPro" id="IPR018275">
    <property type="entry name" value="Ribosomal_bS18_CS"/>
</dbReference>
<dbReference type="InterPro" id="IPR036870">
    <property type="entry name" value="Ribosomal_bS18_sf"/>
</dbReference>
<dbReference type="NCBIfam" id="TIGR00165">
    <property type="entry name" value="S18"/>
    <property type="match status" value="1"/>
</dbReference>
<dbReference type="PANTHER" id="PTHR13479">
    <property type="entry name" value="30S RIBOSOMAL PROTEIN S18"/>
    <property type="match status" value="1"/>
</dbReference>
<dbReference type="PANTHER" id="PTHR13479:SF40">
    <property type="entry name" value="SMALL RIBOSOMAL SUBUNIT PROTEIN BS18M"/>
    <property type="match status" value="1"/>
</dbReference>
<dbReference type="Pfam" id="PF01084">
    <property type="entry name" value="Ribosomal_S18"/>
    <property type="match status" value="1"/>
</dbReference>
<dbReference type="PRINTS" id="PR00974">
    <property type="entry name" value="RIBOSOMALS18"/>
</dbReference>
<dbReference type="SUPFAM" id="SSF46911">
    <property type="entry name" value="Ribosomal protein S18"/>
    <property type="match status" value="1"/>
</dbReference>
<dbReference type="PROSITE" id="PS00057">
    <property type="entry name" value="RIBOSOMAL_S18"/>
    <property type="match status" value="1"/>
</dbReference>
<gene>
    <name evidence="1" type="primary">rpsR</name>
    <name type="ordered locus">DSY5034</name>
</gene>
<name>RS18_DESHY</name>
<feature type="chain" id="PRO_0000345457" description="Small ribosomal subunit protein bS18">
    <location>
        <begin position="1"/>
        <end position="76"/>
    </location>
</feature>
<organism>
    <name type="scientific">Desulfitobacterium hafniense (strain Y51)</name>
    <dbReference type="NCBI Taxonomy" id="138119"/>
    <lineage>
        <taxon>Bacteria</taxon>
        <taxon>Bacillati</taxon>
        <taxon>Bacillota</taxon>
        <taxon>Clostridia</taxon>
        <taxon>Eubacteriales</taxon>
        <taxon>Desulfitobacteriaceae</taxon>
        <taxon>Desulfitobacterium</taxon>
    </lineage>
</organism>
<keyword id="KW-1185">Reference proteome</keyword>
<keyword id="KW-0687">Ribonucleoprotein</keyword>
<keyword id="KW-0689">Ribosomal protein</keyword>
<keyword id="KW-0694">RNA-binding</keyword>
<keyword id="KW-0699">rRNA-binding</keyword>
<accession>Q24MB9</accession>
<evidence type="ECO:0000255" key="1">
    <source>
        <dbReference type="HAMAP-Rule" id="MF_00270"/>
    </source>
</evidence>
<evidence type="ECO:0000305" key="2"/>
<proteinExistence type="inferred from homology"/>
<comment type="function">
    <text evidence="1">Binds as a heterodimer with protein bS6 to the central domain of the 16S rRNA, where it helps stabilize the platform of the 30S subunit.</text>
</comment>
<comment type="subunit">
    <text evidence="1">Part of the 30S ribosomal subunit. Forms a tight heterodimer with protein bS6.</text>
</comment>
<comment type="similarity">
    <text evidence="1">Belongs to the bacterial ribosomal protein bS18 family.</text>
</comment>
<protein>
    <recommendedName>
        <fullName evidence="1">Small ribosomal subunit protein bS18</fullName>
    </recommendedName>
    <alternativeName>
        <fullName evidence="2">30S ribosomal protein S18</fullName>
    </alternativeName>
</protein>